<organism>
    <name type="scientific">Polaromonas sp. (strain JS666 / ATCC BAA-500)</name>
    <dbReference type="NCBI Taxonomy" id="296591"/>
    <lineage>
        <taxon>Bacteria</taxon>
        <taxon>Pseudomonadati</taxon>
        <taxon>Pseudomonadota</taxon>
        <taxon>Betaproteobacteria</taxon>
        <taxon>Burkholderiales</taxon>
        <taxon>Comamonadaceae</taxon>
        <taxon>Polaromonas</taxon>
    </lineage>
</organism>
<evidence type="ECO:0000255" key="1">
    <source>
        <dbReference type="HAMAP-Rule" id="MF_00328"/>
    </source>
</evidence>
<comment type="function">
    <text evidence="1">Essential for recycling GMP and indirectly, cGMP.</text>
</comment>
<comment type="catalytic activity">
    <reaction evidence="1">
        <text>GMP + ATP = GDP + ADP</text>
        <dbReference type="Rhea" id="RHEA:20780"/>
        <dbReference type="ChEBI" id="CHEBI:30616"/>
        <dbReference type="ChEBI" id="CHEBI:58115"/>
        <dbReference type="ChEBI" id="CHEBI:58189"/>
        <dbReference type="ChEBI" id="CHEBI:456216"/>
        <dbReference type="EC" id="2.7.4.8"/>
    </reaction>
</comment>
<comment type="subcellular location">
    <subcellularLocation>
        <location evidence="1">Cytoplasm</location>
    </subcellularLocation>
</comment>
<comment type="similarity">
    <text evidence="1">Belongs to the guanylate kinase family.</text>
</comment>
<name>KGUA_POLSJ</name>
<keyword id="KW-0067">ATP-binding</keyword>
<keyword id="KW-0963">Cytoplasm</keyword>
<keyword id="KW-0418">Kinase</keyword>
<keyword id="KW-0547">Nucleotide-binding</keyword>
<keyword id="KW-1185">Reference proteome</keyword>
<keyword id="KW-0808">Transferase</keyword>
<proteinExistence type="inferred from homology"/>
<accession>Q12DV7</accession>
<dbReference type="EC" id="2.7.4.8" evidence="1"/>
<dbReference type="EMBL" id="CP000316">
    <property type="protein sequence ID" value="ABE43285.1"/>
    <property type="molecule type" value="Genomic_DNA"/>
</dbReference>
<dbReference type="RefSeq" id="WP_011482284.1">
    <property type="nucleotide sequence ID" value="NC_007948.1"/>
</dbReference>
<dbReference type="SMR" id="Q12DV7"/>
<dbReference type="STRING" id="296591.Bpro_1335"/>
<dbReference type="KEGG" id="pol:Bpro_1335"/>
<dbReference type="eggNOG" id="COG0194">
    <property type="taxonomic scope" value="Bacteria"/>
</dbReference>
<dbReference type="HOGENOM" id="CLU_001715_1_2_4"/>
<dbReference type="OrthoDB" id="9808150at2"/>
<dbReference type="Proteomes" id="UP000001983">
    <property type="component" value="Chromosome"/>
</dbReference>
<dbReference type="GO" id="GO:0005829">
    <property type="term" value="C:cytosol"/>
    <property type="evidence" value="ECO:0007669"/>
    <property type="project" value="TreeGrafter"/>
</dbReference>
<dbReference type="GO" id="GO:0005524">
    <property type="term" value="F:ATP binding"/>
    <property type="evidence" value="ECO:0007669"/>
    <property type="project" value="UniProtKB-UniRule"/>
</dbReference>
<dbReference type="GO" id="GO:0004385">
    <property type="term" value="F:guanylate kinase activity"/>
    <property type="evidence" value="ECO:0007669"/>
    <property type="project" value="UniProtKB-UniRule"/>
</dbReference>
<dbReference type="CDD" id="cd00071">
    <property type="entry name" value="GMPK"/>
    <property type="match status" value="1"/>
</dbReference>
<dbReference type="FunFam" id="3.30.63.10:FF:000002">
    <property type="entry name" value="Guanylate kinase 1"/>
    <property type="match status" value="1"/>
</dbReference>
<dbReference type="Gene3D" id="3.30.63.10">
    <property type="entry name" value="Guanylate Kinase phosphate binding domain"/>
    <property type="match status" value="1"/>
</dbReference>
<dbReference type="Gene3D" id="3.40.50.300">
    <property type="entry name" value="P-loop containing nucleotide triphosphate hydrolases"/>
    <property type="match status" value="1"/>
</dbReference>
<dbReference type="HAMAP" id="MF_00328">
    <property type="entry name" value="Guanylate_kinase"/>
    <property type="match status" value="1"/>
</dbReference>
<dbReference type="InterPro" id="IPR008145">
    <property type="entry name" value="GK/Ca_channel_bsu"/>
</dbReference>
<dbReference type="InterPro" id="IPR008144">
    <property type="entry name" value="Guanylate_kin-like_dom"/>
</dbReference>
<dbReference type="InterPro" id="IPR017665">
    <property type="entry name" value="Guanylate_kinase"/>
</dbReference>
<dbReference type="InterPro" id="IPR020590">
    <property type="entry name" value="Guanylate_kinase_CS"/>
</dbReference>
<dbReference type="InterPro" id="IPR027417">
    <property type="entry name" value="P-loop_NTPase"/>
</dbReference>
<dbReference type="NCBIfam" id="TIGR03263">
    <property type="entry name" value="guanyl_kin"/>
    <property type="match status" value="1"/>
</dbReference>
<dbReference type="PANTHER" id="PTHR23117:SF13">
    <property type="entry name" value="GUANYLATE KINASE"/>
    <property type="match status" value="1"/>
</dbReference>
<dbReference type="PANTHER" id="PTHR23117">
    <property type="entry name" value="GUANYLATE KINASE-RELATED"/>
    <property type="match status" value="1"/>
</dbReference>
<dbReference type="Pfam" id="PF00625">
    <property type="entry name" value="Guanylate_kin"/>
    <property type="match status" value="1"/>
</dbReference>
<dbReference type="SMART" id="SM00072">
    <property type="entry name" value="GuKc"/>
    <property type="match status" value="1"/>
</dbReference>
<dbReference type="SUPFAM" id="SSF52540">
    <property type="entry name" value="P-loop containing nucleoside triphosphate hydrolases"/>
    <property type="match status" value="1"/>
</dbReference>
<dbReference type="PROSITE" id="PS00856">
    <property type="entry name" value="GUANYLATE_KINASE_1"/>
    <property type="match status" value="1"/>
</dbReference>
<dbReference type="PROSITE" id="PS50052">
    <property type="entry name" value="GUANYLATE_KINASE_2"/>
    <property type="match status" value="1"/>
</dbReference>
<protein>
    <recommendedName>
        <fullName evidence="1">Guanylate kinase</fullName>
        <ecNumber evidence="1">2.7.4.8</ecNumber>
    </recommendedName>
    <alternativeName>
        <fullName evidence="1">GMP kinase</fullName>
    </alternativeName>
</protein>
<sequence>MDYPGNLFVVAAPSGAGKSSLVKALMELDSAIQPAVSHTTRPPRGQEKHGREYFFLSPEEFDSMVQRDAFLEWAHVHGHRYGTSRQAIEERIAHGKDVILEIDFQGAINIKRIFSNAVLIFILPPSWEELRSRLQRRGEDSPEVIELRLKNAATEMAQAREFDFVIINELFERAVFDLKTIVHAQRLKFSAQRRARAETFRALQIP</sequence>
<gene>
    <name evidence="1" type="primary">gmk</name>
    <name type="ordered locus">Bpro_1335</name>
</gene>
<reference key="1">
    <citation type="journal article" date="2008" name="Appl. Environ. Microbiol.">
        <title>The genome of Polaromonas sp. strain JS666: insights into the evolution of a hydrocarbon- and xenobiotic-degrading bacterium, and features of relevance to biotechnology.</title>
        <authorList>
            <person name="Mattes T.E."/>
            <person name="Alexander A.K."/>
            <person name="Richardson P.M."/>
            <person name="Munk A.C."/>
            <person name="Han C.S."/>
            <person name="Stothard P."/>
            <person name="Coleman N.V."/>
        </authorList>
    </citation>
    <scope>NUCLEOTIDE SEQUENCE [LARGE SCALE GENOMIC DNA]</scope>
    <source>
        <strain>JS666 / ATCC BAA-500</strain>
    </source>
</reference>
<feature type="chain" id="PRO_0000266366" description="Guanylate kinase">
    <location>
        <begin position="1"/>
        <end position="206"/>
    </location>
</feature>
<feature type="domain" description="Guanylate kinase-like" evidence="1">
    <location>
        <begin position="5"/>
        <end position="183"/>
    </location>
</feature>
<feature type="binding site" evidence="1">
    <location>
        <begin position="12"/>
        <end position="19"/>
    </location>
    <ligand>
        <name>ATP</name>
        <dbReference type="ChEBI" id="CHEBI:30616"/>
    </ligand>
</feature>